<accession>Q2FVD0</accession>
<name>Y2783_STAA8</name>
<comment type="subcellular location">
    <subcellularLocation>
        <location evidence="2">Cell membrane</location>
        <topology evidence="2">Single-pass membrane protein</topology>
    </subcellularLocation>
</comment>
<comment type="similarity">
    <text evidence="2">Belongs to the staphylococcal tandem lipoprotein family.</text>
</comment>
<reference key="1">
    <citation type="book" date="2006" name="Gram positive pathogens, 2nd edition">
        <title>The Staphylococcus aureus NCTC 8325 genome.</title>
        <editorList>
            <person name="Fischetti V."/>
            <person name="Novick R."/>
            <person name="Ferretti J."/>
            <person name="Portnoy D."/>
            <person name="Rood J."/>
        </editorList>
        <authorList>
            <person name="Gillaspy A.F."/>
            <person name="Worrell V."/>
            <person name="Orvis J."/>
            <person name="Roe B.A."/>
            <person name="Dyer D.W."/>
            <person name="Iandolo J.J."/>
        </authorList>
    </citation>
    <scope>NUCLEOTIDE SEQUENCE [LARGE SCALE GENOMIC DNA]</scope>
    <source>
        <strain>NCTC 8325 / PS 47</strain>
    </source>
</reference>
<feature type="chain" id="PRO_0000282089" description="Uncharacterized protein SAOUHSC_02783">
    <location>
        <begin position="1"/>
        <end position="264"/>
    </location>
</feature>
<feature type="transmembrane region" description="Helical" evidence="1">
    <location>
        <begin position="7"/>
        <end position="27"/>
    </location>
</feature>
<feature type="helix" evidence="4">
    <location>
        <begin position="32"/>
        <end position="44"/>
    </location>
</feature>
<feature type="helix" evidence="4">
    <location>
        <begin position="52"/>
        <end position="57"/>
    </location>
</feature>
<feature type="strand" evidence="3">
    <location>
        <begin position="64"/>
        <end position="66"/>
    </location>
</feature>
<feature type="strand" evidence="4">
    <location>
        <begin position="73"/>
        <end position="83"/>
    </location>
</feature>
<feature type="strand" evidence="4">
    <location>
        <begin position="90"/>
        <end position="99"/>
    </location>
</feature>
<feature type="turn" evidence="4">
    <location>
        <begin position="100"/>
        <end position="103"/>
    </location>
</feature>
<feature type="strand" evidence="4">
    <location>
        <begin position="104"/>
        <end position="112"/>
    </location>
</feature>
<feature type="strand" evidence="4">
    <location>
        <begin position="127"/>
        <end position="134"/>
    </location>
</feature>
<feature type="strand" evidence="4">
    <location>
        <begin position="137"/>
        <end position="142"/>
    </location>
</feature>
<feature type="helix" evidence="4">
    <location>
        <begin position="147"/>
        <end position="154"/>
    </location>
</feature>
<feature type="helix" evidence="4">
    <location>
        <begin position="159"/>
        <end position="162"/>
    </location>
</feature>
<feature type="helix" evidence="4">
    <location>
        <begin position="168"/>
        <end position="170"/>
    </location>
</feature>
<feature type="strand" evidence="4">
    <location>
        <begin position="171"/>
        <end position="173"/>
    </location>
</feature>
<feature type="strand" evidence="4">
    <location>
        <begin position="175"/>
        <end position="179"/>
    </location>
</feature>
<feature type="turn" evidence="4">
    <location>
        <begin position="180"/>
        <end position="183"/>
    </location>
</feature>
<feature type="strand" evidence="4">
    <location>
        <begin position="184"/>
        <end position="190"/>
    </location>
</feature>
<feature type="helix" evidence="4">
    <location>
        <begin position="196"/>
        <end position="204"/>
    </location>
</feature>
<feature type="strand" evidence="4">
    <location>
        <begin position="214"/>
        <end position="221"/>
    </location>
</feature>
<feature type="strand" evidence="4">
    <location>
        <begin position="231"/>
        <end position="242"/>
    </location>
</feature>
<feature type="strand" evidence="4">
    <location>
        <begin position="244"/>
        <end position="254"/>
    </location>
</feature>
<protein>
    <recommendedName>
        <fullName>Uncharacterized protein SAOUHSC_02783</fullName>
    </recommendedName>
</protein>
<keyword id="KW-0002">3D-structure</keyword>
<keyword id="KW-1003">Cell membrane</keyword>
<keyword id="KW-0472">Membrane</keyword>
<keyword id="KW-1185">Reference proteome</keyword>
<keyword id="KW-0812">Transmembrane</keyword>
<keyword id="KW-1133">Transmembrane helix</keyword>
<proteinExistence type="evidence at protein level"/>
<organism>
    <name type="scientific">Staphylococcus aureus (strain NCTC 8325 / PS 47)</name>
    <dbReference type="NCBI Taxonomy" id="93061"/>
    <lineage>
        <taxon>Bacteria</taxon>
        <taxon>Bacillati</taxon>
        <taxon>Bacillota</taxon>
        <taxon>Bacilli</taxon>
        <taxon>Bacillales</taxon>
        <taxon>Staphylococcaceae</taxon>
        <taxon>Staphylococcus</taxon>
    </lineage>
</organism>
<sequence length="264" mass="30800">MIHSKKLTLGICLVLLIILIVGYVIMTKTNGRNAQIKDTFNQTLKLYPTKNLDDFYDKEGFRDQEFKKGDKGTWIVNSEMVIEPKGKDMETRGMVLYINRNTRTTKGYYFISEMTDDSNGRPKDDEKRYPVKMEHNKIIPTKPLPNDKLKKEIENFKFFVQYGNFKDINDYKDGDISYNPNVPSYSAKYQLNNDDYNVQQLRKRYDIPTKQAPKLLLKGDGDLKGSSVGSRSLEFTFVENKEENIYFTDSVQYTPSEDTRYESN</sequence>
<gene>
    <name type="ordered locus">SAOUHSC_02783</name>
</gene>
<evidence type="ECO:0000255" key="1"/>
<evidence type="ECO:0000305" key="2"/>
<evidence type="ECO:0007829" key="3">
    <source>
        <dbReference type="PDB" id="4EG9"/>
    </source>
</evidence>
<evidence type="ECO:0007829" key="4">
    <source>
        <dbReference type="PDB" id="4EGD"/>
    </source>
</evidence>
<dbReference type="EMBL" id="CP000253">
    <property type="protein sequence ID" value="ABD31787.1"/>
    <property type="molecule type" value="Genomic_DNA"/>
</dbReference>
<dbReference type="RefSeq" id="WP_000581889.1">
    <property type="nucleotide sequence ID" value="NZ_LS483365.1"/>
</dbReference>
<dbReference type="RefSeq" id="YP_501243.1">
    <property type="nucleotide sequence ID" value="NC_007795.1"/>
</dbReference>
<dbReference type="PDB" id="4EG9">
    <property type="method" value="X-ray"/>
    <property type="resolution" value="1.90 A"/>
    <property type="chains" value="A=22-264"/>
</dbReference>
<dbReference type="PDB" id="4EGD">
    <property type="method" value="X-ray"/>
    <property type="resolution" value="1.85 A"/>
    <property type="chains" value="A/B=22-264"/>
</dbReference>
<dbReference type="PDBsum" id="4EG9"/>
<dbReference type="PDBsum" id="4EGD"/>
<dbReference type="SMR" id="Q2FVD0"/>
<dbReference type="PaxDb" id="1280-SAXN108_2734"/>
<dbReference type="GeneID" id="3921438"/>
<dbReference type="KEGG" id="sao:SAOUHSC_02783"/>
<dbReference type="PATRIC" id="fig|93061.5.peg.2516"/>
<dbReference type="eggNOG" id="ENOG5033UD8">
    <property type="taxonomic scope" value="Bacteria"/>
</dbReference>
<dbReference type="HOGENOM" id="CLU_071589_0_1_9"/>
<dbReference type="OrthoDB" id="2189886at2"/>
<dbReference type="EvolutionaryTrace" id="Q2FVD0"/>
<dbReference type="PRO" id="PR:Q2FVD0"/>
<dbReference type="Proteomes" id="UP000008816">
    <property type="component" value="Chromosome"/>
</dbReference>
<dbReference type="GO" id="GO:0005886">
    <property type="term" value="C:plasma membrane"/>
    <property type="evidence" value="ECO:0007669"/>
    <property type="project" value="UniProtKB-SubCell"/>
</dbReference>
<dbReference type="Gene3D" id="2.50.20.40">
    <property type="match status" value="1"/>
</dbReference>
<dbReference type="InterPro" id="IPR007595">
    <property type="entry name" value="Csa"/>
</dbReference>
<dbReference type="InterPro" id="IPR038641">
    <property type="entry name" value="Csa_sf"/>
</dbReference>
<dbReference type="NCBIfam" id="TIGR01742">
    <property type="entry name" value="SA_tandem_lipo"/>
    <property type="match status" value="1"/>
</dbReference>
<dbReference type="Pfam" id="PF04507">
    <property type="entry name" value="DUF576"/>
    <property type="match status" value="1"/>
</dbReference>